<feature type="chain" id="PRO_0000287435" description="BCLAF1 and THRAP3 family member 3">
    <location>
        <begin position="1"/>
        <end position="752"/>
    </location>
</feature>
<feature type="region of interest" description="Disordered" evidence="2">
    <location>
        <begin position="1"/>
        <end position="114"/>
    </location>
</feature>
<feature type="region of interest" description="Disordered" evidence="2">
    <location>
        <begin position="132"/>
        <end position="177"/>
    </location>
</feature>
<feature type="region of interest" description="Disordered" evidence="2">
    <location>
        <begin position="190"/>
        <end position="252"/>
    </location>
</feature>
<feature type="compositionally biased region" description="Basic residues" evidence="2">
    <location>
        <begin position="1"/>
        <end position="13"/>
    </location>
</feature>
<feature type="compositionally biased region" description="Basic and acidic residues" evidence="2">
    <location>
        <begin position="23"/>
        <end position="57"/>
    </location>
</feature>
<feature type="compositionally biased region" description="Basic and acidic residues" evidence="2">
    <location>
        <begin position="85"/>
        <end position="109"/>
    </location>
</feature>
<feature type="compositionally biased region" description="Basic and acidic residues" evidence="2">
    <location>
        <begin position="190"/>
        <end position="199"/>
    </location>
</feature>
<feature type="compositionally biased region" description="Basic and acidic residues" evidence="2">
    <location>
        <begin position="222"/>
        <end position="231"/>
    </location>
</feature>
<feature type="compositionally biased region" description="Basic and acidic residues" evidence="2">
    <location>
        <begin position="238"/>
        <end position="252"/>
    </location>
</feature>
<feature type="modified residue" description="Phosphoserine" evidence="1">
    <location>
        <position position="15"/>
    </location>
</feature>
<feature type="modified residue" description="Phosphoserine" evidence="1">
    <location>
        <position position="17"/>
    </location>
</feature>
<feature type="modified residue" description="Phosphoserine" evidence="1">
    <location>
        <position position="78"/>
    </location>
</feature>
<feature type="modified residue" description="Phosphoserine" evidence="1">
    <location>
        <position position="80"/>
    </location>
</feature>
<feature type="modified residue" description="Phosphoserine" evidence="5">
    <location>
        <position position="205"/>
    </location>
</feature>
<feature type="modified residue" description="Phosphoserine" evidence="5">
    <location>
        <position position="592"/>
    </location>
</feature>
<feature type="cross-link" description="Glycyl lysine isopeptide (Lys-Gly) (interchain with G-Cter in SUMO2)" evidence="1">
    <location>
        <position position="416"/>
    </location>
</feature>
<feature type="splice variant" id="VSP_025460" description="In isoform 2." evidence="3">
    <original>NHQSPSFSKVKTIRADGFQKPPHFIKSNFRKFIQKPYINYTMQRKDAIDQKIFRVEENHQNRRGSKGSFKNFLGGRFQPHYKSHLVQKSMYIQAKYQRLRFAGPRGFITNKFRNRFLRKKKEYPVLPRTNNLELLQVEPTLYEDLTEHLIFVRNWN</original>
    <variation>TILCREKMPLIRRYLELRKIIRTEEALKDLLRTFWVADSSLIINHTWYRRACIFRLNTSAYGLLDQEDLLPINSETDF</variation>
    <location>
        <begin position="597"/>
        <end position="752"/>
    </location>
</feature>
<feature type="sequence conflict" description="In Ref. 1; BAE26266." evidence="4" ref="1">
    <original>K</original>
    <variation>Q</variation>
    <location>
        <position position="166"/>
    </location>
</feature>
<feature type="sequence conflict" description="In Ref. 1; BAE26266." evidence="4" ref="1">
    <original>S</original>
    <variation>N</variation>
    <location>
        <position position="392"/>
    </location>
</feature>
<feature type="sequence conflict" description="In Ref. 1; BAE26266." evidence="4" ref="1">
    <original>A</original>
    <variation>T</variation>
    <location>
        <position position="591"/>
    </location>
</feature>
<feature type="sequence conflict" description="In Ref. 1; BAE26266." evidence="4" ref="1">
    <original>Y</original>
    <variation>C</variation>
    <location sequence="A2AG58-2">
        <position position="657"/>
    </location>
</feature>
<dbReference type="EMBL" id="AK044001">
    <property type="protein sequence ID" value="BAC31733.1"/>
    <property type="molecule type" value="mRNA"/>
</dbReference>
<dbReference type="EMBL" id="AK145159">
    <property type="protein sequence ID" value="BAE26266.1"/>
    <property type="molecule type" value="mRNA"/>
</dbReference>
<dbReference type="EMBL" id="AL672284">
    <property type="protein sequence ID" value="CAM23340.1"/>
    <property type="status" value="ALT_SEQ"/>
    <property type="molecule type" value="Genomic_DNA"/>
</dbReference>
<dbReference type="EMBL" id="AL672284">
    <property type="protein sequence ID" value="CAM23341.1"/>
    <property type="molecule type" value="Genomic_DNA"/>
</dbReference>
<dbReference type="EMBL" id="AL672284">
    <property type="protein sequence ID" value="CAM23342.1"/>
    <property type="molecule type" value="Genomic_DNA"/>
</dbReference>
<dbReference type="CCDS" id="CCDS30503.2">
    <molecule id="A2AG58-1"/>
</dbReference>
<dbReference type="CCDS" id="CCDS90769.1">
    <molecule id="A2AG58-2"/>
</dbReference>
<dbReference type="RefSeq" id="NP_001028644.2">
    <molecule id="A2AG58-1"/>
    <property type="nucleotide sequence ID" value="NM_001033472.2"/>
</dbReference>
<dbReference type="RefSeq" id="NP_001345871.1">
    <molecule id="A2AG58-2"/>
    <property type="nucleotide sequence ID" value="NM_001358942.1"/>
</dbReference>
<dbReference type="RefSeq" id="XP_017174023.1">
    <molecule id="A2AG58-2"/>
    <property type="nucleotide sequence ID" value="XM_017318534.3"/>
</dbReference>
<dbReference type="RefSeq" id="XP_017174024.1">
    <property type="nucleotide sequence ID" value="XM_017318535.1"/>
</dbReference>
<dbReference type="BioGRID" id="238294">
    <property type="interactions" value="1"/>
</dbReference>
<dbReference type="FunCoup" id="A2AG58">
    <property type="interactions" value="241"/>
</dbReference>
<dbReference type="STRING" id="10090.ENSMUSP00000108083"/>
<dbReference type="iPTMnet" id="A2AG58"/>
<dbReference type="PhosphoSitePlus" id="A2AG58"/>
<dbReference type="jPOST" id="A2AG58"/>
<dbReference type="PaxDb" id="10090-ENSMUSP00000108083"/>
<dbReference type="PeptideAtlas" id="A2AG58"/>
<dbReference type="ProteomicsDB" id="273662">
    <molecule id="A2AG58-1"/>
</dbReference>
<dbReference type="ProteomicsDB" id="273663">
    <molecule id="A2AG58-2"/>
</dbReference>
<dbReference type="Antibodypedia" id="9758">
    <property type="antibodies" value="29 antibodies from 10 providers"/>
</dbReference>
<dbReference type="DNASU" id="382252"/>
<dbReference type="Ensembl" id="ENSMUST00000057180.13">
    <molecule id="A2AG58-2"/>
    <property type="protein sequence ID" value="ENSMUSP00000051031.7"/>
    <property type="gene ID" value="ENSMUSG00000044150.13"/>
</dbReference>
<dbReference type="Ensembl" id="ENSMUST00000112464.8">
    <molecule id="A2AG58-1"/>
    <property type="protein sequence ID" value="ENSMUSP00000108083.2"/>
    <property type="gene ID" value="ENSMUSG00000044150.13"/>
</dbReference>
<dbReference type="GeneID" id="382252"/>
<dbReference type="KEGG" id="mmu:382252"/>
<dbReference type="UCSC" id="uc009usr.1">
    <molecule id="A2AG58-1"/>
    <property type="organism name" value="mouse"/>
</dbReference>
<dbReference type="UCSC" id="uc012hrd.1">
    <molecule id="A2AG58-2"/>
    <property type="organism name" value="mouse"/>
</dbReference>
<dbReference type="AGR" id="MGI:2685992"/>
<dbReference type="CTD" id="256643"/>
<dbReference type="MGI" id="MGI:2685992">
    <property type="gene designation" value="Bclaf3"/>
</dbReference>
<dbReference type="VEuPathDB" id="HostDB:ENSMUSG00000044150"/>
<dbReference type="eggNOG" id="ENOG502S4TN">
    <property type="taxonomic scope" value="Eukaryota"/>
</dbReference>
<dbReference type="GeneTree" id="ENSGT00950000183163"/>
<dbReference type="HOGENOM" id="CLU_024256_0_0_1"/>
<dbReference type="InParanoid" id="A2AG58"/>
<dbReference type="OMA" id="KWHEDEF"/>
<dbReference type="OrthoDB" id="9935637at2759"/>
<dbReference type="PhylomeDB" id="A2AG58"/>
<dbReference type="TreeFam" id="TF335939"/>
<dbReference type="BioGRID-ORCS" id="382252">
    <property type="hits" value="2 hits in 76 CRISPR screens"/>
</dbReference>
<dbReference type="ChiTaRS" id="Bclaf3">
    <property type="organism name" value="mouse"/>
</dbReference>
<dbReference type="PRO" id="PR:A2AG58"/>
<dbReference type="Proteomes" id="UP000000589">
    <property type="component" value="Chromosome X"/>
</dbReference>
<dbReference type="RNAct" id="A2AG58">
    <property type="molecule type" value="protein"/>
</dbReference>
<dbReference type="Bgee" id="ENSMUSG00000044150">
    <property type="expression patterns" value="Expressed in placenta labyrinth and 219 other cell types or tissues"/>
</dbReference>
<dbReference type="ExpressionAtlas" id="A2AG58">
    <property type="expression patterns" value="baseline and differential"/>
</dbReference>
<dbReference type="GO" id="GO:0005739">
    <property type="term" value="C:mitochondrion"/>
    <property type="evidence" value="ECO:0007669"/>
    <property type="project" value="UniProtKB-SubCell"/>
</dbReference>
<dbReference type="InterPro" id="IPR029199">
    <property type="entry name" value="THRAP3_BCLAF1"/>
</dbReference>
<dbReference type="PANTHER" id="PTHR15268:SF17">
    <property type="entry name" value="BCLAF1 AND THRAP3 FAMILY MEMBER 3"/>
    <property type="match status" value="1"/>
</dbReference>
<dbReference type="PANTHER" id="PTHR15268">
    <property type="entry name" value="THRAP3/BCLAF1"/>
    <property type="match status" value="1"/>
</dbReference>
<dbReference type="Pfam" id="PF15440">
    <property type="entry name" value="THRAP3_BCLAF1"/>
    <property type="match status" value="1"/>
</dbReference>
<comment type="subcellular location">
    <subcellularLocation>
        <location evidence="4">Mitochondrion</location>
    </subcellularLocation>
</comment>
<comment type="alternative products">
    <event type="alternative splicing"/>
    <isoform>
        <id>A2AG58-1</id>
        <name>1</name>
        <sequence type="displayed"/>
    </isoform>
    <isoform>
        <id>A2AG58-2</id>
        <name>2</name>
        <sequence type="described" ref="VSP_025460"/>
    </isoform>
</comment>
<comment type="similarity">
    <text evidence="4">Belongs to the BCLAF1/THRAP3 family.</text>
</comment>
<comment type="sequence caution" evidence="4">
    <conflict type="erroneous gene model prediction">
        <sequence resource="EMBL-CDS" id="CAM23340"/>
    </conflict>
</comment>
<name>BCLA3_MOUSE</name>
<gene>
    <name evidence="1" type="primary">Bclaf3</name>
</gene>
<protein>
    <recommendedName>
        <fullName evidence="1">BCLAF1 and THRAP3 family member 3</fullName>
    </recommendedName>
</protein>
<evidence type="ECO:0000250" key="1">
    <source>
        <dbReference type="UniProtKB" id="A2AJT9"/>
    </source>
</evidence>
<evidence type="ECO:0000256" key="2">
    <source>
        <dbReference type="SAM" id="MobiDB-lite"/>
    </source>
</evidence>
<evidence type="ECO:0000303" key="3">
    <source>
    </source>
</evidence>
<evidence type="ECO:0000305" key="4"/>
<evidence type="ECO:0007744" key="5">
    <source>
    </source>
</evidence>
<proteinExistence type="evidence at protein level"/>
<organism>
    <name type="scientific">Mus musculus</name>
    <name type="common">Mouse</name>
    <dbReference type="NCBI Taxonomy" id="10090"/>
    <lineage>
        <taxon>Eukaryota</taxon>
        <taxon>Metazoa</taxon>
        <taxon>Chordata</taxon>
        <taxon>Craniata</taxon>
        <taxon>Vertebrata</taxon>
        <taxon>Euteleostomi</taxon>
        <taxon>Mammalia</taxon>
        <taxon>Eutheria</taxon>
        <taxon>Euarchontoglires</taxon>
        <taxon>Glires</taxon>
        <taxon>Rodentia</taxon>
        <taxon>Myomorpha</taxon>
        <taxon>Muroidea</taxon>
        <taxon>Muridae</taxon>
        <taxon>Murinae</taxon>
        <taxon>Mus</taxon>
        <taxon>Mus</taxon>
    </lineage>
</organism>
<reference key="1">
    <citation type="journal article" date="2005" name="Science">
        <title>The transcriptional landscape of the mammalian genome.</title>
        <authorList>
            <person name="Carninci P."/>
            <person name="Kasukawa T."/>
            <person name="Katayama S."/>
            <person name="Gough J."/>
            <person name="Frith M.C."/>
            <person name="Maeda N."/>
            <person name="Oyama R."/>
            <person name="Ravasi T."/>
            <person name="Lenhard B."/>
            <person name="Wells C."/>
            <person name="Kodzius R."/>
            <person name="Shimokawa K."/>
            <person name="Bajic V.B."/>
            <person name="Brenner S.E."/>
            <person name="Batalov S."/>
            <person name="Forrest A.R."/>
            <person name="Zavolan M."/>
            <person name="Davis M.J."/>
            <person name="Wilming L.G."/>
            <person name="Aidinis V."/>
            <person name="Allen J.E."/>
            <person name="Ambesi-Impiombato A."/>
            <person name="Apweiler R."/>
            <person name="Aturaliya R.N."/>
            <person name="Bailey T.L."/>
            <person name="Bansal M."/>
            <person name="Baxter L."/>
            <person name="Beisel K.W."/>
            <person name="Bersano T."/>
            <person name="Bono H."/>
            <person name="Chalk A.M."/>
            <person name="Chiu K.P."/>
            <person name="Choudhary V."/>
            <person name="Christoffels A."/>
            <person name="Clutterbuck D.R."/>
            <person name="Crowe M.L."/>
            <person name="Dalla E."/>
            <person name="Dalrymple B.P."/>
            <person name="de Bono B."/>
            <person name="Della Gatta G."/>
            <person name="di Bernardo D."/>
            <person name="Down T."/>
            <person name="Engstrom P."/>
            <person name="Fagiolini M."/>
            <person name="Faulkner G."/>
            <person name="Fletcher C.F."/>
            <person name="Fukushima T."/>
            <person name="Furuno M."/>
            <person name="Futaki S."/>
            <person name="Gariboldi M."/>
            <person name="Georgii-Hemming P."/>
            <person name="Gingeras T.R."/>
            <person name="Gojobori T."/>
            <person name="Green R.E."/>
            <person name="Gustincich S."/>
            <person name="Harbers M."/>
            <person name="Hayashi Y."/>
            <person name="Hensch T.K."/>
            <person name="Hirokawa N."/>
            <person name="Hill D."/>
            <person name="Huminiecki L."/>
            <person name="Iacono M."/>
            <person name="Ikeo K."/>
            <person name="Iwama A."/>
            <person name="Ishikawa T."/>
            <person name="Jakt M."/>
            <person name="Kanapin A."/>
            <person name="Katoh M."/>
            <person name="Kawasawa Y."/>
            <person name="Kelso J."/>
            <person name="Kitamura H."/>
            <person name="Kitano H."/>
            <person name="Kollias G."/>
            <person name="Krishnan S.P."/>
            <person name="Kruger A."/>
            <person name="Kummerfeld S.K."/>
            <person name="Kurochkin I.V."/>
            <person name="Lareau L.F."/>
            <person name="Lazarevic D."/>
            <person name="Lipovich L."/>
            <person name="Liu J."/>
            <person name="Liuni S."/>
            <person name="McWilliam S."/>
            <person name="Madan Babu M."/>
            <person name="Madera M."/>
            <person name="Marchionni L."/>
            <person name="Matsuda H."/>
            <person name="Matsuzawa S."/>
            <person name="Miki H."/>
            <person name="Mignone F."/>
            <person name="Miyake S."/>
            <person name="Morris K."/>
            <person name="Mottagui-Tabar S."/>
            <person name="Mulder N."/>
            <person name="Nakano N."/>
            <person name="Nakauchi H."/>
            <person name="Ng P."/>
            <person name="Nilsson R."/>
            <person name="Nishiguchi S."/>
            <person name="Nishikawa S."/>
            <person name="Nori F."/>
            <person name="Ohara O."/>
            <person name="Okazaki Y."/>
            <person name="Orlando V."/>
            <person name="Pang K.C."/>
            <person name="Pavan W.J."/>
            <person name="Pavesi G."/>
            <person name="Pesole G."/>
            <person name="Petrovsky N."/>
            <person name="Piazza S."/>
            <person name="Reed J."/>
            <person name="Reid J.F."/>
            <person name="Ring B.Z."/>
            <person name="Ringwald M."/>
            <person name="Rost B."/>
            <person name="Ruan Y."/>
            <person name="Salzberg S.L."/>
            <person name="Sandelin A."/>
            <person name="Schneider C."/>
            <person name="Schoenbach C."/>
            <person name="Sekiguchi K."/>
            <person name="Semple C.A."/>
            <person name="Seno S."/>
            <person name="Sessa L."/>
            <person name="Sheng Y."/>
            <person name="Shibata Y."/>
            <person name="Shimada H."/>
            <person name="Shimada K."/>
            <person name="Silva D."/>
            <person name="Sinclair B."/>
            <person name="Sperling S."/>
            <person name="Stupka E."/>
            <person name="Sugiura K."/>
            <person name="Sultana R."/>
            <person name="Takenaka Y."/>
            <person name="Taki K."/>
            <person name="Tammoja K."/>
            <person name="Tan S.L."/>
            <person name="Tang S."/>
            <person name="Taylor M.S."/>
            <person name="Tegner J."/>
            <person name="Teichmann S.A."/>
            <person name="Ueda H.R."/>
            <person name="van Nimwegen E."/>
            <person name="Verardo R."/>
            <person name="Wei C.L."/>
            <person name="Yagi K."/>
            <person name="Yamanishi H."/>
            <person name="Zabarovsky E."/>
            <person name="Zhu S."/>
            <person name="Zimmer A."/>
            <person name="Hide W."/>
            <person name="Bult C."/>
            <person name="Grimmond S.M."/>
            <person name="Teasdale R.D."/>
            <person name="Liu E.T."/>
            <person name="Brusic V."/>
            <person name="Quackenbush J."/>
            <person name="Wahlestedt C."/>
            <person name="Mattick J.S."/>
            <person name="Hume D.A."/>
            <person name="Kai C."/>
            <person name="Sasaki D."/>
            <person name="Tomaru Y."/>
            <person name="Fukuda S."/>
            <person name="Kanamori-Katayama M."/>
            <person name="Suzuki M."/>
            <person name="Aoki J."/>
            <person name="Arakawa T."/>
            <person name="Iida J."/>
            <person name="Imamura K."/>
            <person name="Itoh M."/>
            <person name="Kato T."/>
            <person name="Kawaji H."/>
            <person name="Kawagashira N."/>
            <person name="Kawashima T."/>
            <person name="Kojima M."/>
            <person name="Kondo S."/>
            <person name="Konno H."/>
            <person name="Nakano K."/>
            <person name="Ninomiya N."/>
            <person name="Nishio T."/>
            <person name="Okada M."/>
            <person name="Plessy C."/>
            <person name="Shibata K."/>
            <person name="Shiraki T."/>
            <person name="Suzuki S."/>
            <person name="Tagami M."/>
            <person name="Waki K."/>
            <person name="Watahiki A."/>
            <person name="Okamura-Oho Y."/>
            <person name="Suzuki H."/>
            <person name="Kawai J."/>
            <person name="Hayashizaki Y."/>
        </authorList>
    </citation>
    <scope>NUCLEOTIDE SEQUENCE [LARGE SCALE MRNA] (ISOFORM 2)</scope>
    <source>
        <strain>C57BL/6J</strain>
        <tissue>Brain cortex</tissue>
        <tissue>Mammary gland</tissue>
    </source>
</reference>
<reference key="2">
    <citation type="journal article" date="2009" name="PLoS Biol.">
        <title>Lineage-specific biology revealed by a finished genome assembly of the mouse.</title>
        <authorList>
            <person name="Church D.M."/>
            <person name="Goodstadt L."/>
            <person name="Hillier L.W."/>
            <person name="Zody M.C."/>
            <person name="Goldstein S."/>
            <person name="She X."/>
            <person name="Bult C.J."/>
            <person name="Agarwala R."/>
            <person name="Cherry J.L."/>
            <person name="DiCuccio M."/>
            <person name="Hlavina W."/>
            <person name="Kapustin Y."/>
            <person name="Meric P."/>
            <person name="Maglott D."/>
            <person name="Birtle Z."/>
            <person name="Marques A.C."/>
            <person name="Graves T."/>
            <person name="Zhou S."/>
            <person name="Teague B."/>
            <person name="Potamousis K."/>
            <person name="Churas C."/>
            <person name="Place M."/>
            <person name="Herschleb J."/>
            <person name="Runnheim R."/>
            <person name="Forrest D."/>
            <person name="Amos-Landgraf J."/>
            <person name="Schwartz D.C."/>
            <person name="Cheng Z."/>
            <person name="Lindblad-Toh K."/>
            <person name="Eichler E.E."/>
            <person name="Ponting C.P."/>
        </authorList>
    </citation>
    <scope>NUCLEOTIDE SEQUENCE [LARGE SCALE GENOMIC DNA]</scope>
    <source>
        <strain>C57BL/6J</strain>
    </source>
</reference>
<reference key="3">
    <citation type="journal article" date="2010" name="Cell">
        <title>A tissue-specific atlas of mouse protein phosphorylation and expression.</title>
        <authorList>
            <person name="Huttlin E.L."/>
            <person name="Jedrychowski M.P."/>
            <person name="Elias J.E."/>
            <person name="Goswami T."/>
            <person name="Rad R."/>
            <person name="Beausoleil S.A."/>
            <person name="Villen J."/>
            <person name="Haas W."/>
            <person name="Sowa M.E."/>
            <person name="Gygi S.P."/>
        </authorList>
    </citation>
    <scope>PHOSPHORYLATION [LARGE SCALE ANALYSIS] AT SER-205 AND SER-592</scope>
    <scope>IDENTIFICATION BY MASS SPECTROMETRY [LARGE SCALE ANALYSIS]</scope>
    <source>
        <tissue>Kidney</tissue>
        <tissue>Lung</tissue>
        <tissue>Pancreas</tissue>
        <tissue>Spleen</tissue>
        <tissue>Testis</tissue>
    </source>
</reference>
<accession>A2AG58</accession>
<accession>A2AG56</accession>
<accession>A2AG57</accession>
<accession>Q3UM32</accession>
<accession>Q8BRL2</accession>
<keyword id="KW-0025">Alternative splicing</keyword>
<keyword id="KW-1017">Isopeptide bond</keyword>
<keyword id="KW-0496">Mitochondrion</keyword>
<keyword id="KW-0597">Phosphoprotein</keyword>
<keyword id="KW-1185">Reference proteome</keyword>
<keyword id="KW-0832">Ubl conjugation</keyword>
<sequence length="752" mass="90111">MARSRSRSPRWKQRSLSPQSRNFEYHEERHFHGHYDPEYRHDQQRPFTWRMDDEKHGQNKPRIPPRVNSYHRSYVNRSPSPNVKPVEKFDTYKPHQEYFPGRGDDDRRSQYMPTYTESAATYMEHERDCYIPTVQGRYTPDDHRGRGRGSGRGEKPPQMSLGKPPKMSLGKPPQMSLADSLRFKEKWHEDELRHQRVQEESYPQSPRRGSEDFGTRNPFQKRYPEDHDFRKYGYTSKRPTDAARYENRDPARIPKWKPEHSFLPFQEKKEEWSFGAQGHRYTEREYPERSSTTRVSYDYRHKHHKLSESEQDFPDGRFHKHLKEEDRKYSSIKAPANRELDCFSTTRGREIENEQINGPFYLYNKNSVSYNHTNIKDADLEPCNDKWKKKISKEDCRKENASFSKQFDTSPKPEEKCYSLIKKKPLSVKVDRNKTDTFRSTSRYSAERQISHDLVAIGKTSDNFHPVFQHLDSTQNPENKPTEEFAQEIITLIHKVKADSFVTPDITLNERFSRIKNRQDADFNQTKSNSDPEFHRRIDMSLDDFQNKYTMVYEPDKTLVKVIEPNDLRHDIERRRKERLQNEDENIFHMASPTERNHQSPSFSKVKTIRADGFQKPPHFIKSNFRKFIQKPYINYTMQRKDAIDQKIFRVEENHQNRRGSKGSFKNFLGGRFQPHYKSHLVQKSMYIQAKYQRLRFAGPRGFITNKFRNRFLRKKKEYPVLPRTNNLELLQVEPTLYEDLTEHLIFVRNWN</sequence>